<proteinExistence type="evidence at protein level"/>
<sequence>MADVAGTSNRDFRGREQRLFNSEQYNYNNSLNGEVSVWVYAYYSDGSVLVINKNSQYKVGISETFKALKEYREGQHNDSYDEYEVNQSIYYPNGGDARKFHSNAKPRAIQIIFSPSVNVRTIKMAKGNAVSVPDEYLQRSHPWEATGIKYRKIKRDGEIVGYSHYFELPHEYNSISLAVSGVHKNPSSYNVGSAHNVMDVFQSCDLALRFCNRYWAELELVNHYISPNAYPYLDINNHSYGVALSNRQ</sequence>
<dbReference type="EMBL" id="M19112">
    <property type="protein sequence ID" value="AAA46694.1"/>
    <property type="molecule type" value="Genomic_RNA"/>
</dbReference>
<dbReference type="EMBL" id="D37768">
    <property type="protein sequence ID" value="BAA07022.1"/>
    <property type="molecule type" value="Genomic_RNA"/>
</dbReference>
<dbReference type="PIR" id="A29961">
    <property type="entry name" value="PYXRCP"/>
</dbReference>
<dbReference type="PDB" id="5A9B">
    <property type="method" value="X-ray"/>
    <property type="resolution" value="1.88 A"/>
    <property type="chains" value="A=1-70, A=104-248"/>
</dbReference>
<dbReference type="PDB" id="5AXU">
    <property type="method" value="X-ray"/>
    <property type="resolution" value="1.60 A"/>
    <property type="chains" value="A=2-248"/>
</dbReference>
<dbReference type="PDB" id="5AXV">
    <property type="method" value="X-ray"/>
    <property type="resolution" value="2.04 A"/>
    <property type="chains" value="A=2-248"/>
</dbReference>
<dbReference type="PDB" id="5EXY">
    <property type="method" value="X-ray"/>
    <property type="resolution" value="1.55 A"/>
    <property type="chains" value="A=2-248"/>
</dbReference>
<dbReference type="PDB" id="5EXZ">
    <property type="method" value="X-ray"/>
    <property type="resolution" value="1.90 A"/>
    <property type="chains" value="A=2-248"/>
</dbReference>
<dbReference type="PDB" id="5GQI">
    <property type="method" value="X-ray"/>
    <property type="resolution" value="1.30 A"/>
    <property type="chains" value="A=2-248"/>
</dbReference>
<dbReference type="PDB" id="5GQJ">
    <property type="method" value="X-ray"/>
    <property type="resolution" value="1.50 A"/>
    <property type="chains" value="A=2-248"/>
</dbReference>
<dbReference type="PDB" id="5GQK">
    <property type="method" value="X-ray"/>
    <property type="resolution" value="1.50 A"/>
    <property type="chains" value="A=2-248"/>
</dbReference>
<dbReference type="PDB" id="5GQL">
    <property type="method" value="X-ray"/>
    <property type="resolution" value="1.78 A"/>
    <property type="chains" value="A=2-248"/>
</dbReference>
<dbReference type="PDB" id="5GQM">
    <property type="method" value="X-ray"/>
    <property type="resolution" value="1.68 A"/>
    <property type="chains" value="A=2-248"/>
</dbReference>
<dbReference type="PDB" id="5GQN">
    <property type="method" value="X-ray"/>
    <property type="resolution" value="1.55 A"/>
    <property type="chains" value="A=2-248"/>
</dbReference>
<dbReference type="PDB" id="5YHA">
    <property type="method" value="X-ray"/>
    <property type="resolution" value="1.58 A"/>
    <property type="chains" value="A=2-248"/>
</dbReference>
<dbReference type="PDB" id="5YHB">
    <property type="method" value="X-ray"/>
    <property type="resolution" value="2.08 A"/>
    <property type="chains" value="A=2-248"/>
</dbReference>
<dbReference type="PDB" id="5YR1">
    <property type="method" value="X-ray"/>
    <property type="resolution" value="1.72 A"/>
    <property type="chains" value="A=1-248"/>
</dbReference>
<dbReference type="PDB" id="5YR9">
    <property type="method" value="X-ray"/>
    <property type="resolution" value="1.70 A"/>
    <property type="chains" value="A=1-248"/>
</dbReference>
<dbReference type="PDB" id="5YRA">
    <property type="method" value="X-ray"/>
    <property type="resolution" value="1.79 A"/>
    <property type="chains" value="A=1-248"/>
</dbReference>
<dbReference type="PDB" id="5YRB">
    <property type="method" value="X-ray"/>
    <property type="resolution" value="1.65 A"/>
    <property type="chains" value="A=1-248"/>
</dbReference>
<dbReference type="PDB" id="5YRC">
    <property type="method" value="X-ray"/>
    <property type="resolution" value="1.67 A"/>
    <property type="chains" value="A=1-248"/>
</dbReference>
<dbReference type="PDB" id="5YRD">
    <property type="method" value="X-ray"/>
    <property type="resolution" value="1.85 A"/>
    <property type="chains" value="A=1-248"/>
</dbReference>
<dbReference type="PDB" id="6LEE">
    <property type="method" value="X-ray"/>
    <property type="resolution" value="1.95 A"/>
    <property type="chains" value="A=2-248"/>
</dbReference>
<dbReference type="PDB" id="7WYR">
    <property type="method" value="X-ray"/>
    <property type="resolution" value="1.75 A"/>
    <property type="chains" value="A=2-248"/>
</dbReference>
<dbReference type="PDB" id="7XHR">
    <property type="method" value="X-ray"/>
    <property type="resolution" value="1.80 A"/>
    <property type="chains" value="A=2-248"/>
</dbReference>
<dbReference type="PDB" id="7XWS">
    <property type="method" value="X-ray"/>
    <property type="resolution" value="1.95 A"/>
    <property type="chains" value="A=2-248"/>
</dbReference>
<dbReference type="PDB" id="8J2Q">
    <property type="method" value="X-ray"/>
    <property type="resolution" value="1.92 A"/>
    <property type="chains" value="A=1-14, A=26-248"/>
</dbReference>
<dbReference type="PDB" id="8WLG">
    <property type="method" value="X-ray"/>
    <property type="resolution" value="2.55 A"/>
    <property type="chains" value="A=1-14, A=25-248"/>
</dbReference>
<dbReference type="PDB" id="8X8S">
    <property type="method" value="X-ray"/>
    <property type="resolution" value="2.04 A"/>
    <property type="chains" value="A=1-14, A=26-248"/>
</dbReference>
<dbReference type="PDB" id="8X8V">
    <property type="method" value="X-ray"/>
    <property type="resolution" value="2.00 A"/>
    <property type="chains" value="A=1-14, A=26-248"/>
</dbReference>
<dbReference type="PDBsum" id="5A9B"/>
<dbReference type="PDBsum" id="5AXU"/>
<dbReference type="PDBsum" id="5AXV"/>
<dbReference type="PDBsum" id="5EXY"/>
<dbReference type="PDBsum" id="5EXZ"/>
<dbReference type="PDBsum" id="5GQI"/>
<dbReference type="PDBsum" id="5GQJ"/>
<dbReference type="PDBsum" id="5GQK"/>
<dbReference type="PDBsum" id="5GQL"/>
<dbReference type="PDBsum" id="5GQM"/>
<dbReference type="PDBsum" id="5GQN"/>
<dbReference type="PDBsum" id="5YHA"/>
<dbReference type="PDBsum" id="5YHB"/>
<dbReference type="PDBsum" id="5YR1"/>
<dbReference type="PDBsum" id="5YR9"/>
<dbReference type="PDBsum" id="5YRA"/>
<dbReference type="PDBsum" id="5YRB"/>
<dbReference type="PDBsum" id="5YRC"/>
<dbReference type="PDBsum" id="5YRD"/>
<dbReference type="PDBsum" id="6LEE"/>
<dbReference type="PDBsum" id="7WYR"/>
<dbReference type="PDBsum" id="7XHR"/>
<dbReference type="PDBsum" id="7XWS"/>
<dbReference type="PDBsum" id="8J2Q"/>
<dbReference type="PDBsum" id="8WLG"/>
<dbReference type="PDBsum" id="8X8S"/>
<dbReference type="PDBsum" id="8X8V"/>
<dbReference type="SMR" id="P11041"/>
<dbReference type="EvolutionaryTrace" id="P11041"/>
<dbReference type="GO" id="GO:0030430">
    <property type="term" value="C:host cell cytoplasm"/>
    <property type="evidence" value="ECO:0007669"/>
    <property type="project" value="UniProtKB-SubCell"/>
</dbReference>
<dbReference type="GO" id="GO:0039679">
    <property type="term" value="C:viral occlusion body"/>
    <property type="evidence" value="ECO:0007669"/>
    <property type="project" value="UniProtKB-KW"/>
</dbReference>
<dbReference type="InterPro" id="IPR008464">
    <property type="entry name" value="Cypo_polyhedrin_Cypovirus1"/>
</dbReference>
<dbReference type="Pfam" id="PF05865">
    <property type="entry name" value="Cypo_polyhedrin"/>
    <property type="match status" value="1"/>
</dbReference>
<organism>
    <name type="scientific">Bombyx mori cytoplasmic polyhedrosis virus</name>
    <name type="common">BmCPV</name>
    <dbReference type="NCBI Taxonomy" id="110829"/>
    <lineage>
        <taxon>Viruses</taxon>
        <taxon>Riboviria</taxon>
        <taxon>Orthornavirae</taxon>
        <taxon>Duplornaviricota</taxon>
        <taxon>Resentoviricetes</taxon>
        <taxon>Reovirales</taxon>
        <taxon>Spinareoviridae</taxon>
        <taxon>Cypovirus</taxon>
        <taxon>Cypovirus 1</taxon>
    </lineage>
</organism>
<evidence type="ECO:0000255" key="1"/>
<evidence type="ECO:0007829" key="2">
    <source>
        <dbReference type="PDB" id="5EXY"/>
    </source>
</evidence>
<evidence type="ECO:0007829" key="3">
    <source>
        <dbReference type="PDB" id="5GQI"/>
    </source>
</evidence>
<evidence type="ECO:0007829" key="4">
    <source>
        <dbReference type="PDB" id="8J2Q"/>
    </source>
</evidence>
<comment type="function">
    <text>Major component of the virus occlusion bodies, which are large proteinaceous structures (polyhedra), that protect the virus from the outside environment for extended periods until they are ingested by insect larvae.</text>
</comment>
<comment type="subcellular location">
    <subcellularLocation>
        <location>Host cytoplasm</location>
    </subcellularLocation>
    <text>Strain H polyhedrin is found in the cytoplasm, while strain A is found in the nucleus.</text>
</comment>
<comment type="miscellaneous">
    <text>The sequence of strain H is shown.</text>
</comment>
<accession>P11041</accession>
<protein>
    <recommendedName>
        <fullName>Polyhedrin</fullName>
    </recommendedName>
    <alternativeName>
        <fullName>C-polyhedrin</fullName>
    </alternativeName>
</protein>
<keyword id="KW-0002">3D-structure</keyword>
<keyword id="KW-0325">Glycoprotein</keyword>
<keyword id="KW-1035">Host cytoplasm</keyword>
<keyword id="KW-0426">Late protein</keyword>
<keyword id="KW-0732">Signal</keyword>
<keyword id="KW-0842">Viral occlusion body</keyword>
<organismHost>
    <name type="scientific">Bombyx mori</name>
    <name type="common">Silk moth</name>
    <dbReference type="NCBI Taxonomy" id="7091"/>
</organismHost>
<feature type="signal peptide">
    <location>
        <begin position="1"/>
        <end position="27"/>
    </location>
</feature>
<feature type="chain" id="PRO_0000040680" description="Polyhedrin">
    <location>
        <begin position="28"/>
        <end position="248"/>
    </location>
</feature>
<feature type="glycosylation site" description="N-linked (GlcNAc...) asparagine; by host" evidence="1">
    <location>
        <position position="28"/>
    </location>
</feature>
<feature type="glycosylation site" description="N-linked (GlcNAc...) asparagine; by host" evidence="1">
    <location>
        <position position="77"/>
    </location>
</feature>
<feature type="glycosylation site" description="N-linked (GlcNAc...) asparagine; by host" evidence="1">
    <location>
        <position position="86"/>
    </location>
</feature>
<feature type="glycosylation site" description="N-linked (GlcNAc...) asparagine; by host" evidence="1">
    <location>
        <position position="237"/>
    </location>
</feature>
<feature type="sequence variant" description="In strain: A.">
    <original>H</original>
    <variation>Y</variation>
    <location>
        <position position="101"/>
    </location>
</feature>
<feature type="sequence variant" description="In strain: A.">
    <original>Q</original>
    <variation>QRLLV</variation>
    <location>
        <position position="248"/>
    </location>
</feature>
<feature type="helix" evidence="3">
    <location>
        <begin position="12"/>
        <end position="29"/>
    </location>
</feature>
<feature type="strand" evidence="3">
    <location>
        <begin position="33"/>
        <end position="42"/>
    </location>
</feature>
<feature type="strand" evidence="3">
    <location>
        <begin position="48"/>
        <end position="63"/>
    </location>
</feature>
<feature type="helix" evidence="3">
    <location>
        <begin position="65"/>
        <end position="68"/>
    </location>
</feature>
<feature type="helix" evidence="3">
    <location>
        <begin position="79"/>
        <end position="90"/>
    </location>
</feature>
<feature type="strand" evidence="3">
    <location>
        <begin position="107"/>
        <end position="113"/>
    </location>
</feature>
<feature type="helix" evidence="3">
    <location>
        <begin position="119"/>
        <end position="121"/>
    </location>
</feature>
<feature type="strand" evidence="3">
    <location>
        <begin position="123"/>
        <end position="127"/>
    </location>
</feature>
<feature type="strand" evidence="3">
    <location>
        <begin position="133"/>
        <end position="136"/>
    </location>
</feature>
<feature type="helix" evidence="3">
    <location>
        <begin position="137"/>
        <end position="139"/>
    </location>
</feature>
<feature type="helix" evidence="3">
    <location>
        <begin position="147"/>
        <end position="149"/>
    </location>
</feature>
<feature type="strand" evidence="3">
    <location>
        <begin position="151"/>
        <end position="155"/>
    </location>
</feature>
<feature type="strand" evidence="3">
    <location>
        <begin position="158"/>
        <end position="167"/>
    </location>
</feature>
<feature type="strand" evidence="3">
    <location>
        <begin position="176"/>
        <end position="183"/>
    </location>
</feature>
<feature type="helix" evidence="4">
    <location>
        <begin position="186"/>
        <end position="189"/>
    </location>
</feature>
<feature type="turn" evidence="3">
    <location>
        <begin position="191"/>
        <end position="193"/>
    </location>
</feature>
<feature type="turn" evidence="2">
    <location>
        <begin position="194"/>
        <end position="196"/>
    </location>
</feature>
<feature type="helix" evidence="3">
    <location>
        <begin position="197"/>
        <end position="206"/>
    </location>
</feature>
<feature type="strand" evidence="3">
    <location>
        <begin position="208"/>
        <end position="215"/>
    </location>
</feature>
<feature type="helix" evidence="3">
    <location>
        <begin position="217"/>
        <end position="223"/>
    </location>
</feature>
<feature type="helix" evidence="3">
    <location>
        <begin position="226"/>
        <end position="228"/>
    </location>
</feature>
<name>PYHD_CPVBM</name>
<reference key="1">
    <citation type="journal article" date="1988" name="J. Virol.">
        <title>Molecular cloning and characterization of cytoplasmic polyhedrosis virus polyhedrin and a viable deletion mutant gene.</title>
        <authorList>
            <person name="Arella M."/>
            <person name="Lavallee C."/>
            <person name="Belloncik S."/>
            <person name="Furuichi Y."/>
        </authorList>
    </citation>
    <scope>NUCLEOTIDE SEQUENCE [GENOMIC RNA]</scope>
    <source>
        <strain>H</strain>
    </source>
</reference>
<reference key="2">
    <citation type="journal article" date="1989" name="J. Gen. Virol.">
        <title>Nucleotide sequence of the polyhedrin gene of Bombyx mori cytoplasmic polyhedrosis virus A strain with nuclear localization of polyhedra.</title>
        <authorList>
            <person name="Mori H."/>
            <person name="Minobe Y."/>
            <person name="Sasaki T."/>
            <person name="Kawase S."/>
        </authorList>
    </citation>
    <scope>NUCLEOTIDE SEQUENCE [GENOMIC RNA]</scope>
    <source>
        <strain>A</strain>
        <strain>H</strain>
    </source>
</reference>
<reference key="3">
    <citation type="submission" date="1994-07" db="EMBL/GenBank/DDBJ databases">
        <authorList>
            <person name="Mori H."/>
        </authorList>
    </citation>
    <scope>NUCLEOTIDE SEQUENCE [GENOMIC RNA]</scope>
    <source>
        <strain>A</strain>
    </source>
</reference>